<proteinExistence type="evidence at protein level"/>
<evidence type="ECO:0000250" key="1">
    <source>
        <dbReference type="UniProtKB" id="Q05059"/>
    </source>
</evidence>
<evidence type="ECO:0000250" key="2">
    <source>
        <dbReference type="UniProtKB" id="Q69091"/>
    </source>
</evidence>
<evidence type="ECO:0000255" key="3"/>
<evidence type="ECO:0000256" key="4">
    <source>
        <dbReference type="SAM" id="MobiDB-lite"/>
    </source>
</evidence>
<evidence type="ECO:0000269" key="5">
    <source>
    </source>
</evidence>
<evidence type="ECO:0000269" key="6">
    <source>
    </source>
</evidence>
<evidence type="ECO:0000305" key="7"/>
<evidence type="ECO:0007744" key="8">
    <source>
        <dbReference type="PDB" id="1JMA"/>
    </source>
</evidence>
<evidence type="ECO:0007744" key="9">
    <source>
        <dbReference type="PDB" id="1L2G"/>
    </source>
</evidence>
<evidence type="ECO:0007744" key="10">
    <source>
        <dbReference type="PDB" id="2C36"/>
    </source>
</evidence>
<evidence type="ECO:0007744" key="11">
    <source>
        <dbReference type="PDB" id="2C3A"/>
    </source>
</evidence>
<evidence type="ECO:0007829" key="12">
    <source>
        <dbReference type="PDB" id="1JMA"/>
    </source>
</evidence>
<evidence type="ECO:0007829" key="13">
    <source>
        <dbReference type="PDB" id="2C36"/>
    </source>
</evidence>
<organism>
    <name type="scientific">Human herpesvirus 1 (strain Patton)</name>
    <name type="common">HHV-1</name>
    <name type="synonym">Human herpes simplex virus 1</name>
    <dbReference type="NCBI Taxonomy" id="10308"/>
    <lineage>
        <taxon>Viruses</taxon>
        <taxon>Duplodnaviria</taxon>
        <taxon>Heunggongvirae</taxon>
        <taxon>Peploviricota</taxon>
        <taxon>Herviviricetes</taxon>
        <taxon>Herpesvirales</taxon>
        <taxon>Orthoherpesviridae</taxon>
        <taxon>Alphaherpesvirinae</taxon>
        <taxon>Simplexvirus</taxon>
        <taxon>Simplexvirus humanalpha1</taxon>
        <taxon>Human herpesvirus 1</taxon>
    </lineage>
</organism>
<protein>
    <recommendedName>
        <fullName>Envelope glycoprotein D</fullName>
        <shortName>gD</shortName>
    </recommendedName>
</protein>
<dbReference type="EMBL" id="X02138">
    <property type="protein sequence ID" value="CAA26060.1"/>
    <property type="molecule type" value="Genomic_DNA"/>
</dbReference>
<dbReference type="EMBL" id="J02217">
    <property type="protein sequence ID" value="AAA45785.1"/>
    <property type="molecule type" value="Genomic_DNA"/>
</dbReference>
<dbReference type="PIR" id="A94268">
    <property type="entry name" value="VGBED1"/>
</dbReference>
<dbReference type="PDB" id="1JMA">
    <property type="method" value="X-ray"/>
    <property type="resolution" value="2.65 A"/>
    <property type="chains" value="A=26-310"/>
</dbReference>
<dbReference type="PDB" id="1L2G">
    <property type="method" value="X-ray"/>
    <property type="resolution" value="2.85 A"/>
    <property type="chains" value="A/B/C/D=26-310"/>
</dbReference>
<dbReference type="PDB" id="2C36">
    <property type="method" value="X-ray"/>
    <property type="resolution" value="2.11 A"/>
    <property type="chains" value="A/B=48-332"/>
</dbReference>
<dbReference type="PDB" id="2C3A">
    <property type="method" value="X-ray"/>
    <property type="resolution" value="2.50 A"/>
    <property type="chains" value="A/B=47-332"/>
</dbReference>
<dbReference type="PDBsum" id="1JMA"/>
<dbReference type="PDBsum" id="1L2G"/>
<dbReference type="PDBsum" id="2C36"/>
<dbReference type="PDBsum" id="2C3A"/>
<dbReference type="BMRB" id="P57083"/>
<dbReference type="SMR" id="P57083"/>
<dbReference type="IntAct" id="P57083">
    <property type="interactions" value="1"/>
</dbReference>
<dbReference type="MINT" id="P57083"/>
<dbReference type="GlyCosmos" id="P57083">
    <property type="glycosylation" value="3 sites, No reported glycans"/>
</dbReference>
<dbReference type="iPTMnet" id="P57083"/>
<dbReference type="EvolutionaryTrace" id="P57083"/>
<dbReference type="GO" id="GO:0044177">
    <property type="term" value="C:host cell Golgi apparatus"/>
    <property type="evidence" value="ECO:0007669"/>
    <property type="project" value="UniProtKB-SubCell"/>
</dbReference>
<dbReference type="GO" id="GO:0016020">
    <property type="term" value="C:membrane"/>
    <property type="evidence" value="ECO:0007669"/>
    <property type="project" value="UniProtKB-KW"/>
</dbReference>
<dbReference type="GO" id="GO:0019031">
    <property type="term" value="C:viral envelope"/>
    <property type="evidence" value="ECO:0007669"/>
    <property type="project" value="UniProtKB-KW"/>
</dbReference>
<dbReference type="GO" id="GO:0055036">
    <property type="term" value="C:virion membrane"/>
    <property type="evidence" value="ECO:0007669"/>
    <property type="project" value="UniProtKB-SubCell"/>
</dbReference>
<dbReference type="GO" id="GO:0046872">
    <property type="term" value="F:metal ion binding"/>
    <property type="evidence" value="ECO:0007669"/>
    <property type="project" value="UniProtKB-KW"/>
</dbReference>
<dbReference type="GO" id="GO:0098670">
    <property type="term" value="P:entry receptor-mediated virion attachment to host cell"/>
    <property type="evidence" value="ECO:0007669"/>
    <property type="project" value="UniProtKB-KW"/>
</dbReference>
<dbReference type="GO" id="GO:0046718">
    <property type="term" value="P:symbiont entry into host cell"/>
    <property type="evidence" value="ECO:0007669"/>
    <property type="project" value="UniProtKB-KW"/>
</dbReference>
<dbReference type="CDD" id="cd12087">
    <property type="entry name" value="TM_EGFR-like"/>
    <property type="match status" value="1"/>
</dbReference>
<dbReference type="FunFam" id="2.70.230.10:FF:000001">
    <property type="entry name" value="Envelope glycoprotein D"/>
    <property type="match status" value="1"/>
</dbReference>
<dbReference type="Gene3D" id="2.70.230.10">
    <property type="match status" value="1"/>
</dbReference>
<dbReference type="InterPro" id="IPR002896">
    <property type="entry name" value="Herpes_glycop_dom"/>
</dbReference>
<dbReference type="InterPro" id="IPR036179">
    <property type="entry name" value="Ig-like_dom_sf"/>
</dbReference>
<dbReference type="Pfam" id="PF01537">
    <property type="entry name" value="Herpes_glycop_D"/>
    <property type="match status" value="1"/>
</dbReference>
<dbReference type="SUPFAM" id="SSF48726">
    <property type="entry name" value="Immunoglobulin"/>
    <property type="match status" value="1"/>
</dbReference>
<sequence>MGGTAARLGAVILFVVIVGLHGVRGKYALADASLKMADPNRFRGKDLPVLDQLTDPPGVRRVYHIQAGLPDPFQPPSLPITVYYAVLERACRSVLLNAPSEAPQIVRGASEDVRKQPYNLTIAWFRMGGNCAIPITVMEYTECSYNKSLGACPIRTQPRWNYYDSFSAVSEDNLGFLMHAPAFETAGTYLRLVKINDWTEITQFILEHRAKGSCKYALPLRIPPSACLSPQAYQQGVTVDSIGMLPRFIPENQRTVAVYSLKIAGWHGPKAPYTSTLLPPELSETPNATQPELAPEDPEDSALLEDPVGTVAPQIPPNWHIPSIQDAATPYHPPATPNNMGLIAGAVGGSLLAALVICGIVYWMHRRTRKAPKRIRLPHIREDDQPSSHQPLFY</sequence>
<comment type="function">
    <text evidence="1 5">Envelope glycoprotein that binds to the host cell entry receptors NECTIN1, TNFRSF14/HVEM and 3-O-sulfated heparan sulfate, promoting the virus entry into host cells (PubMed:11511370). May trigger fusion with host membrane, by recruiting the fusion machinery composed of gB and gH/gL (By similarity).</text>
</comment>
<comment type="subunit">
    <text evidence="1 2">Homodimer (By similarity). Interacts with host receptor TNFRSF14. Interacts with host receptor NECTIN1. Interacts (via profusion domain) with gB; this interaction occurs in the absence of gH/gL. Interacts (via profusion domain) with gH/gL heterodimer; this interaction occurs in the absence of gB. Associates with the gB-gH/gL-gD complex. Interacts (via C-terminus) with UL11 tegument protein. Interacts with host RSAD2 (By similarity).</text>
</comment>
<comment type="subcellular location">
    <subcellularLocation>
        <location evidence="1">Virion membrane</location>
        <topology evidence="1">Single-pass type I membrane protein</topology>
    </subcellularLocation>
    <subcellularLocation>
        <location evidence="2">Host Golgi apparatus</location>
    </subcellularLocation>
    <text evidence="2">During virion morphogenesis, this protein probably accumulates in the endosomes and trans-Golgi where secondary envelopment occurs.</text>
</comment>
<comment type="similarity">
    <text evidence="7">Belongs to the herpesviridae glycoprotein D family.</text>
</comment>
<organismHost>
    <name type="scientific">Homo sapiens</name>
    <name type="common">Human</name>
    <dbReference type="NCBI Taxonomy" id="9606"/>
</organismHost>
<reference key="1">
    <citation type="journal article" date="1982" name="Science">
        <title>Herpes simplex virus type-1 glycoprotein D gene: nucleotide sequence and expression in Escherichia coli.</title>
        <authorList>
            <person name="Watson R.J."/>
            <person name="Weis J.H."/>
            <person name="Salstrom J.S."/>
            <person name="Enquist L.W."/>
        </authorList>
    </citation>
    <scope>NUCLEOTIDE SEQUENCE [GENOMIC DNA]</scope>
</reference>
<reference key="2">
    <citation type="journal article" date="2001" name="Mol. Cell">
        <title>Herpes simplex virus glycoprotein D bound to the human receptor HveA.</title>
        <authorList>
            <person name="Carfi A."/>
            <person name="Willis S.H."/>
            <person name="Whitbeck J.C."/>
            <person name="Krummenacher C."/>
            <person name="Cohen G.H."/>
            <person name="Eisenberg R.J."/>
            <person name="Wiley D.C."/>
        </authorList>
    </citation>
    <scope>X-RAY CRYSTALLOGRAPHY (2.65 ANGSTROMS) OF 26-310 IN COMPLEX WITH TNFRSF14</scope>
    <scope>FUNCTION</scope>
    <scope>DISULFIDE BONDS</scope>
    <scope>GLYCOSYLATION AT ASN-119</scope>
</reference>
<reference key="3">
    <citation type="journal article" date="2005" name="EMBO J.">
        <title>Structure of unliganded HSV gD reveals a mechanism for receptor-mediated activation of virus entry.</title>
        <authorList>
            <person name="Krummenacher C."/>
            <person name="Supekar V.M."/>
            <person name="Whitbeck J.C."/>
            <person name="Lazear E."/>
            <person name="Connolly S.A."/>
            <person name="Eisenberg R.J."/>
            <person name="Cohen G.H."/>
            <person name="Wiley D.C."/>
            <person name="Carfi A."/>
        </authorList>
    </citation>
    <scope>X-RAY CRYSTALLOGRAPHY (2.11 ANGSTROMS) OF 48-331 IN COMPLEX WITH ZINC IONS</scope>
    <scope>DISULFIDE BONDS</scope>
    <scope>ZINC-BINDING</scope>
    <scope>GLYCOSYLATION AT ASN-119</scope>
    <scope>MUTAGENESIS OF VAL-62; TRP-319 AND ALA-327</scope>
</reference>
<name>GD_HHV1P</name>
<feature type="signal peptide" evidence="3">
    <location>
        <begin position="1"/>
        <end position="25"/>
    </location>
</feature>
<feature type="chain" id="PRO_0000038214" description="Envelope glycoprotein D">
    <location>
        <begin position="26"/>
        <end position="394"/>
    </location>
</feature>
<feature type="topological domain" description="Virion surface" evidence="3">
    <location>
        <begin position="26"/>
        <end position="339"/>
    </location>
</feature>
<feature type="transmembrane region" description="Helical" evidence="3">
    <location>
        <begin position="340"/>
        <end position="364"/>
    </location>
</feature>
<feature type="topological domain" description="Intravirion" evidence="3">
    <location>
        <begin position="365"/>
        <end position="394"/>
    </location>
</feature>
<feature type="region of interest" description="Interaction with TNFRSF14" evidence="5">
    <location>
        <begin position="25"/>
        <end position="57"/>
    </location>
</feature>
<feature type="region of interest" description="Profusion" evidence="1">
    <location>
        <begin position="261"/>
        <end position="305"/>
    </location>
</feature>
<feature type="region of interest" description="Disordered" evidence="4">
    <location>
        <begin position="275"/>
        <end position="301"/>
    </location>
</feature>
<feature type="binding site" evidence="6 10">
    <location>
        <position position="64"/>
    </location>
    <ligand>
        <name>Zn(2+)</name>
        <dbReference type="ChEBI" id="CHEBI:29105"/>
        <note>ligand shared between dimeric partners</note>
    </ligand>
</feature>
<feature type="binding site" evidence="6 10">
    <location>
        <position position="240"/>
    </location>
    <ligand>
        <name>Zn(2+)</name>
        <dbReference type="ChEBI" id="CHEBI:29105"/>
        <note>ligand shared between dimeric partners</note>
    </ligand>
</feature>
<feature type="glycosylation site" description="N-linked (GlcNAc...) asparagine; by host" evidence="5 6 8 9 10 11">
    <location>
        <position position="119"/>
    </location>
</feature>
<feature type="glycosylation site" description="N-linked (GlcNAc...) asparagine; by host" evidence="3">
    <location>
        <position position="146"/>
    </location>
</feature>
<feature type="glycosylation site" description="N-linked (GlcNAc...) asparagine; by host" evidence="3">
    <location>
        <position position="287"/>
    </location>
</feature>
<feature type="disulfide bond" evidence="5 6 8 9 10 11">
    <location>
        <begin position="91"/>
        <end position="214"/>
    </location>
</feature>
<feature type="disulfide bond" evidence="5 6 8 9 10 11">
    <location>
        <begin position="131"/>
        <end position="227"/>
    </location>
</feature>
<feature type="disulfide bond" evidence="5 6 8 9 10 11">
    <location>
        <begin position="143"/>
        <end position="152"/>
    </location>
</feature>
<feature type="mutagenesis site" description="Impaired virus entry into host cell; when associated with C-327. Inability of the corresponding soluble gD to bind TNFRSF14 and NECTIN1." evidence="6">
    <original>V</original>
    <variation>C</variation>
    <location>
        <position position="62"/>
    </location>
</feature>
<feature type="mutagenesis site" description="Impaired virus entry into host cell." evidence="6">
    <original>W</original>
    <variation>A</variation>
    <location>
        <position position="319"/>
    </location>
</feature>
<feature type="mutagenesis site" description="Impaired virus entry into host cell; when associated with C-62. Inability of the corresponding soluble gD to bind TNFRSF14 and NECTIN1." evidence="6">
    <original>A</original>
    <variation>C</variation>
    <location>
        <position position="327"/>
    </location>
</feature>
<feature type="helix" evidence="12">
    <location>
        <begin position="32"/>
        <end position="35"/>
    </location>
</feature>
<feature type="turn" evidence="12">
    <location>
        <begin position="39"/>
        <end position="41"/>
    </location>
</feature>
<feature type="strand" evidence="12">
    <location>
        <begin position="45"/>
        <end position="47"/>
    </location>
</feature>
<feature type="strand" evidence="13">
    <location>
        <begin position="60"/>
        <end position="63"/>
    </location>
</feature>
<feature type="strand" evidence="13">
    <location>
        <begin position="65"/>
        <end position="68"/>
    </location>
</feature>
<feature type="strand" evidence="13">
    <location>
        <begin position="82"/>
        <end position="87"/>
    </location>
</feature>
<feature type="strand" evidence="13">
    <location>
        <begin position="92"/>
        <end position="96"/>
    </location>
</feature>
<feature type="helix" evidence="13">
    <location>
        <begin position="102"/>
        <end position="107"/>
    </location>
</feature>
<feature type="helix" evidence="13">
    <location>
        <begin position="111"/>
        <end position="114"/>
    </location>
</feature>
<feature type="strand" evidence="13">
    <location>
        <begin position="118"/>
        <end position="128"/>
    </location>
</feature>
<feature type="strand" evidence="13">
    <location>
        <begin position="131"/>
        <end position="143"/>
    </location>
</feature>
<feature type="strand" evidence="13">
    <location>
        <begin position="153"/>
        <end position="156"/>
    </location>
</feature>
<feature type="strand" evidence="13">
    <location>
        <begin position="159"/>
        <end position="162"/>
    </location>
</feature>
<feature type="turn" evidence="13">
    <location>
        <begin position="164"/>
        <end position="166"/>
    </location>
</feature>
<feature type="strand" evidence="13">
    <location>
        <begin position="167"/>
        <end position="169"/>
    </location>
</feature>
<feature type="strand" evidence="13">
    <location>
        <begin position="176"/>
        <end position="180"/>
    </location>
</feature>
<feature type="helix" evidence="13">
    <location>
        <begin position="183"/>
        <end position="185"/>
    </location>
</feature>
<feature type="strand" evidence="13">
    <location>
        <begin position="187"/>
        <end position="195"/>
    </location>
</feature>
<feature type="strand" evidence="13">
    <location>
        <begin position="198"/>
        <end position="212"/>
    </location>
</feature>
<feature type="helix" evidence="13">
    <location>
        <begin position="224"/>
        <end position="226"/>
    </location>
</feature>
<feature type="helix" evidence="13">
    <location>
        <begin position="230"/>
        <end position="235"/>
    </location>
</feature>
<feature type="turn" evidence="13">
    <location>
        <begin position="239"/>
        <end position="243"/>
    </location>
</feature>
<feature type="helix" evidence="13">
    <location>
        <begin position="250"/>
        <end position="264"/>
    </location>
</feature>
<feature type="strand" evidence="13">
    <location>
        <begin position="276"/>
        <end position="278"/>
    </location>
</feature>
<feature type="helix" evidence="12">
    <location>
        <begin position="280"/>
        <end position="283"/>
    </location>
</feature>
<feature type="helix" evidence="13">
    <location>
        <begin position="298"/>
        <end position="301"/>
    </location>
</feature>
<feature type="strand" evidence="13">
    <location>
        <begin position="306"/>
        <end position="308"/>
    </location>
</feature>
<feature type="strand" evidence="13">
    <location>
        <begin position="326"/>
        <end position="330"/>
    </location>
</feature>
<keyword id="KW-0002">3D-structure</keyword>
<keyword id="KW-1015">Disulfide bond</keyword>
<keyword id="KW-0325">Glycoprotein</keyword>
<keyword id="KW-1040">Host Golgi apparatus</keyword>
<keyword id="KW-0945">Host-virus interaction</keyword>
<keyword id="KW-0472">Membrane</keyword>
<keyword id="KW-0479">Metal-binding</keyword>
<keyword id="KW-0732">Signal</keyword>
<keyword id="KW-0812">Transmembrane</keyword>
<keyword id="KW-1133">Transmembrane helix</keyword>
<keyword id="KW-1161">Viral attachment to host cell</keyword>
<keyword id="KW-1234">Viral attachment to host entry receptor</keyword>
<keyword id="KW-0261">Viral envelope protein</keyword>
<keyword id="KW-0946">Virion</keyword>
<keyword id="KW-1160">Virus entry into host cell</keyword>
<keyword id="KW-0862">Zinc</keyword>
<accession>P57083</accession>
<accession>P03171</accession>
<gene>
    <name type="primary">gD</name>
    <name type="synonym">US6</name>
</gene>